<comment type="function">
    <text evidence="1">Protease subunit of a proteasome-like degradation complex believed to be a general protein degrading machinery.</text>
</comment>
<comment type="catalytic activity">
    <reaction evidence="1">
        <text>ATP-dependent cleavage of peptide bonds with broad specificity.</text>
        <dbReference type="EC" id="3.4.25.2"/>
    </reaction>
</comment>
<comment type="activity regulation">
    <text evidence="1">Allosterically activated by HslU binding.</text>
</comment>
<comment type="subunit">
    <text evidence="1">A double ring-shaped homohexamer of HslV is capped on each side by a ring-shaped HslU homohexamer. The assembly of the HslU/HslV complex is dependent on binding of ATP.</text>
</comment>
<comment type="subcellular location">
    <subcellularLocation>
        <location evidence="1">Cytoplasm</location>
    </subcellularLocation>
</comment>
<comment type="similarity">
    <text evidence="1">Belongs to the peptidase T1B family. HslV subfamily.</text>
</comment>
<gene>
    <name evidence="1" type="primary">hslV</name>
    <name type="ordered locus">CHAB381_1062</name>
</gene>
<proteinExistence type="inferred from homology"/>
<evidence type="ECO:0000255" key="1">
    <source>
        <dbReference type="HAMAP-Rule" id="MF_00248"/>
    </source>
</evidence>
<dbReference type="EC" id="3.4.25.2" evidence="1"/>
<dbReference type="EMBL" id="CP000776">
    <property type="protein sequence ID" value="ABS51183.1"/>
    <property type="molecule type" value="Genomic_DNA"/>
</dbReference>
<dbReference type="RefSeq" id="WP_012108918.1">
    <property type="nucleotide sequence ID" value="NC_009714.1"/>
</dbReference>
<dbReference type="SMR" id="A7I279"/>
<dbReference type="STRING" id="360107.CHAB381_1062"/>
<dbReference type="KEGG" id="cha:CHAB381_1062"/>
<dbReference type="eggNOG" id="COG5405">
    <property type="taxonomic scope" value="Bacteria"/>
</dbReference>
<dbReference type="HOGENOM" id="CLU_093872_1_1_7"/>
<dbReference type="OrthoDB" id="9804884at2"/>
<dbReference type="Proteomes" id="UP000002407">
    <property type="component" value="Chromosome"/>
</dbReference>
<dbReference type="GO" id="GO:0009376">
    <property type="term" value="C:HslUV protease complex"/>
    <property type="evidence" value="ECO:0007669"/>
    <property type="project" value="UniProtKB-UniRule"/>
</dbReference>
<dbReference type="GO" id="GO:0005839">
    <property type="term" value="C:proteasome core complex"/>
    <property type="evidence" value="ECO:0007669"/>
    <property type="project" value="InterPro"/>
</dbReference>
<dbReference type="GO" id="GO:0046872">
    <property type="term" value="F:metal ion binding"/>
    <property type="evidence" value="ECO:0007669"/>
    <property type="project" value="UniProtKB-KW"/>
</dbReference>
<dbReference type="GO" id="GO:0004298">
    <property type="term" value="F:threonine-type endopeptidase activity"/>
    <property type="evidence" value="ECO:0007669"/>
    <property type="project" value="UniProtKB-KW"/>
</dbReference>
<dbReference type="GO" id="GO:0051603">
    <property type="term" value="P:proteolysis involved in protein catabolic process"/>
    <property type="evidence" value="ECO:0007669"/>
    <property type="project" value="InterPro"/>
</dbReference>
<dbReference type="Gene3D" id="3.60.20.10">
    <property type="entry name" value="Glutamine Phosphoribosylpyrophosphate, subunit 1, domain 1"/>
    <property type="match status" value="1"/>
</dbReference>
<dbReference type="HAMAP" id="MF_00248">
    <property type="entry name" value="HslV"/>
    <property type="match status" value="1"/>
</dbReference>
<dbReference type="InterPro" id="IPR022281">
    <property type="entry name" value="ATP-dep_Prtase_HsIV_su"/>
</dbReference>
<dbReference type="InterPro" id="IPR029055">
    <property type="entry name" value="Ntn_hydrolases_N"/>
</dbReference>
<dbReference type="InterPro" id="IPR001353">
    <property type="entry name" value="Proteasome_sua/b"/>
</dbReference>
<dbReference type="InterPro" id="IPR023333">
    <property type="entry name" value="Proteasome_suB-type"/>
</dbReference>
<dbReference type="NCBIfam" id="TIGR03692">
    <property type="entry name" value="ATP_dep_HslV"/>
    <property type="match status" value="1"/>
</dbReference>
<dbReference type="NCBIfam" id="NF003964">
    <property type="entry name" value="PRK05456.1"/>
    <property type="match status" value="1"/>
</dbReference>
<dbReference type="PANTHER" id="PTHR32194:SF0">
    <property type="entry name" value="ATP-DEPENDENT PROTEASE SUBUNIT HSLV"/>
    <property type="match status" value="1"/>
</dbReference>
<dbReference type="PANTHER" id="PTHR32194">
    <property type="entry name" value="METALLOPROTEASE TLDD"/>
    <property type="match status" value="1"/>
</dbReference>
<dbReference type="Pfam" id="PF00227">
    <property type="entry name" value="Proteasome"/>
    <property type="match status" value="1"/>
</dbReference>
<dbReference type="SUPFAM" id="SSF56235">
    <property type="entry name" value="N-terminal nucleophile aminohydrolases (Ntn hydrolases)"/>
    <property type="match status" value="1"/>
</dbReference>
<dbReference type="PROSITE" id="PS51476">
    <property type="entry name" value="PROTEASOME_BETA_2"/>
    <property type="match status" value="1"/>
</dbReference>
<sequence>MFKATTILAYKGKNGSIIGGDGQVTFGNTVLKGTATKIRKIGKDGKVLAGFAGSTTDAFNLFDMFEKCLESAKNDLLKAAVDFSKEWRKDKYLRKLEAMMLVLDREHIFLLSGVGDVVEPDDGKIAAIGSGGNYALSAARALDKFGNLNEEELVKESLKIASEICIYTNNHIKTYAIWDNK</sequence>
<protein>
    <recommendedName>
        <fullName evidence="1">ATP-dependent protease subunit HslV</fullName>
        <ecNumber evidence="1">3.4.25.2</ecNumber>
    </recommendedName>
</protein>
<reference key="1">
    <citation type="submission" date="2007-07" db="EMBL/GenBank/DDBJ databases">
        <title>Complete genome sequence of Campylobacter hominis ATCC BAA-381, a commensal isolated from the human gastrointestinal tract.</title>
        <authorList>
            <person name="Fouts D.E."/>
            <person name="Mongodin E.F."/>
            <person name="Puiu D."/>
            <person name="Sebastian Y."/>
            <person name="Miller W.G."/>
            <person name="Mandrell R.E."/>
            <person name="Nelson K.E."/>
        </authorList>
    </citation>
    <scope>NUCLEOTIDE SEQUENCE [LARGE SCALE GENOMIC DNA]</scope>
    <source>
        <strain>ATCC BAA-381 / DSM 21671 / CCUG 45161 / LMG 19568 / NCTC 13146 / CH001A</strain>
    </source>
</reference>
<name>HSLV_CAMHC</name>
<feature type="chain" id="PRO_1000012598" description="ATP-dependent protease subunit HslV">
    <location>
        <begin position="1"/>
        <end position="181"/>
    </location>
</feature>
<feature type="active site" evidence="1">
    <location>
        <position position="5"/>
    </location>
</feature>
<feature type="binding site" evidence="1">
    <location>
        <position position="162"/>
    </location>
    <ligand>
        <name>Na(+)</name>
        <dbReference type="ChEBI" id="CHEBI:29101"/>
    </ligand>
</feature>
<feature type="binding site" evidence="1">
    <location>
        <position position="165"/>
    </location>
    <ligand>
        <name>Na(+)</name>
        <dbReference type="ChEBI" id="CHEBI:29101"/>
    </ligand>
</feature>
<feature type="binding site" evidence="1">
    <location>
        <position position="168"/>
    </location>
    <ligand>
        <name>Na(+)</name>
        <dbReference type="ChEBI" id="CHEBI:29101"/>
    </ligand>
</feature>
<accession>A7I279</accession>
<organism>
    <name type="scientific">Campylobacter hominis (strain ATCC BAA-381 / DSM 21671 / CCUG 45161 / LMG 19568 / NCTC 13146 / CH001A)</name>
    <dbReference type="NCBI Taxonomy" id="360107"/>
    <lineage>
        <taxon>Bacteria</taxon>
        <taxon>Pseudomonadati</taxon>
        <taxon>Campylobacterota</taxon>
        <taxon>Epsilonproteobacteria</taxon>
        <taxon>Campylobacterales</taxon>
        <taxon>Campylobacteraceae</taxon>
        <taxon>Campylobacter</taxon>
    </lineage>
</organism>
<keyword id="KW-0021">Allosteric enzyme</keyword>
<keyword id="KW-0963">Cytoplasm</keyword>
<keyword id="KW-0378">Hydrolase</keyword>
<keyword id="KW-0479">Metal-binding</keyword>
<keyword id="KW-0645">Protease</keyword>
<keyword id="KW-1185">Reference proteome</keyword>
<keyword id="KW-0915">Sodium</keyword>
<keyword id="KW-0888">Threonine protease</keyword>